<reference key="1">
    <citation type="journal article" date="1999" name="Nature">
        <title>Sequence and analysis of chromosome 2 of the plant Arabidopsis thaliana.</title>
        <authorList>
            <person name="Lin X."/>
            <person name="Kaul S."/>
            <person name="Rounsley S.D."/>
            <person name="Shea T.P."/>
            <person name="Benito M.-I."/>
            <person name="Town C.D."/>
            <person name="Fujii C.Y."/>
            <person name="Mason T.M."/>
            <person name="Bowman C.L."/>
            <person name="Barnstead M.E."/>
            <person name="Feldblyum T.V."/>
            <person name="Buell C.R."/>
            <person name="Ketchum K.A."/>
            <person name="Lee J.J."/>
            <person name="Ronning C.M."/>
            <person name="Koo H.L."/>
            <person name="Moffat K.S."/>
            <person name="Cronin L.A."/>
            <person name="Shen M."/>
            <person name="Pai G."/>
            <person name="Van Aken S."/>
            <person name="Umayam L."/>
            <person name="Tallon L.J."/>
            <person name="Gill J.E."/>
            <person name="Adams M.D."/>
            <person name="Carrera A.J."/>
            <person name="Creasy T.H."/>
            <person name="Goodman H.M."/>
            <person name="Somerville C.R."/>
            <person name="Copenhaver G.P."/>
            <person name="Preuss D."/>
            <person name="Nierman W.C."/>
            <person name="White O."/>
            <person name="Eisen J.A."/>
            <person name="Salzberg S.L."/>
            <person name="Fraser C.M."/>
            <person name="Venter J.C."/>
        </authorList>
    </citation>
    <scope>NUCLEOTIDE SEQUENCE [LARGE SCALE GENOMIC DNA]</scope>
    <source>
        <strain>cv. Columbia</strain>
    </source>
</reference>
<reference key="2">
    <citation type="journal article" date="2017" name="Plant J.">
        <title>Araport11: a complete reannotation of the Arabidopsis thaliana reference genome.</title>
        <authorList>
            <person name="Cheng C.Y."/>
            <person name="Krishnakumar V."/>
            <person name="Chan A.P."/>
            <person name="Thibaud-Nissen F."/>
            <person name="Schobel S."/>
            <person name="Town C.D."/>
        </authorList>
    </citation>
    <scope>GENOME REANNOTATION</scope>
    <source>
        <strain>cv. Columbia</strain>
    </source>
</reference>
<reference key="3">
    <citation type="journal article" date="2003" name="Science">
        <title>Empirical analysis of transcriptional activity in the Arabidopsis genome.</title>
        <authorList>
            <person name="Yamada K."/>
            <person name="Lim J."/>
            <person name="Dale J.M."/>
            <person name="Chen H."/>
            <person name="Shinn P."/>
            <person name="Palm C.J."/>
            <person name="Southwick A.M."/>
            <person name="Wu H.C."/>
            <person name="Kim C.J."/>
            <person name="Nguyen M."/>
            <person name="Pham P.K."/>
            <person name="Cheuk R.F."/>
            <person name="Karlin-Newmann G."/>
            <person name="Liu S.X."/>
            <person name="Lam B."/>
            <person name="Sakano H."/>
            <person name="Wu T."/>
            <person name="Yu G."/>
            <person name="Miranda M."/>
            <person name="Quach H.L."/>
            <person name="Tripp M."/>
            <person name="Chang C.H."/>
            <person name="Lee J.M."/>
            <person name="Toriumi M.J."/>
            <person name="Chan M.M."/>
            <person name="Tang C.C."/>
            <person name="Onodera C.S."/>
            <person name="Deng J.M."/>
            <person name="Akiyama K."/>
            <person name="Ansari Y."/>
            <person name="Arakawa T."/>
            <person name="Banh J."/>
            <person name="Banno F."/>
            <person name="Bowser L."/>
            <person name="Brooks S.Y."/>
            <person name="Carninci P."/>
            <person name="Chao Q."/>
            <person name="Choy N."/>
            <person name="Enju A."/>
            <person name="Goldsmith A.D."/>
            <person name="Gurjal M."/>
            <person name="Hansen N.F."/>
            <person name="Hayashizaki Y."/>
            <person name="Johnson-Hopson C."/>
            <person name="Hsuan V.W."/>
            <person name="Iida K."/>
            <person name="Karnes M."/>
            <person name="Khan S."/>
            <person name="Koesema E."/>
            <person name="Ishida J."/>
            <person name="Jiang P.X."/>
            <person name="Jones T."/>
            <person name="Kawai J."/>
            <person name="Kamiya A."/>
            <person name="Meyers C."/>
            <person name="Nakajima M."/>
            <person name="Narusaka M."/>
            <person name="Seki M."/>
            <person name="Sakurai T."/>
            <person name="Satou M."/>
            <person name="Tamse R."/>
            <person name="Vaysberg M."/>
            <person name="Wallender E.K."/>
            <person name="Wong C."/>
            <person name="Yamamura Y."/>
            <person name="Yuan S."/>
            <person name="Shinozaki K."/>
            <person name="Davis R.W."/>
            <person name="Theologis A."/>
            <person name="Ecker J.R."/>
        </authorList>
    </citation>
    <scope>NUCLEOTIDE SEQUENCE [LARGE SCALE MRNA]</scope>
    <source>
        <strain>cv. Columbia</strain>
    </source>
</reference>
<comment type="function">
    <text evidence="1">Ubiquitous transcription factor required for a diverse set of processes. It is a component of the CCR4 complex involved in the control of gene expression (By similarity).</text>
</comment>
<comment type="catalytic activity">
    <reaction>
        <text>Exonucleolytic cleavage of poly(A) to 5'-AMP.</text>
        <dbReference type="EC" id="3.1.13.4"/>
    </reaction>
</comment>
<comment type="cofactor">
    <cofactor evidence="1">
        <name>a divalent metal cation</name>
        <dbReference type="ChEBI" id="CHEBI:60240"/>
    </cofactor>
</comment>
<comment type="subunit">
    <text evidence="1">Component of the CCR4-NOT complex, at least composed of CRR4 and CAF1 proteins.</text>
</comment>
<comment type="subcellular location">
    <subcellularLocation>
        <location evidence="1">Nucleus</location>
    </subcellularLocation>
    <subcellularLocation>
        <location evidence="1">Cytoplasm</location>
    </subcellularLocation>
</comment>
<comment type="similarity">
    <text evidence="2">Belongs to the CAF1 family.</text>
</comment>
<dbReference type="EC" id="3.1.13.4"/>
<dbReference type="EMBL" id="AC006223">
    <property type="protein sequence ID" value="AAD15397.2"/>
    <property type="molecule type" value="Genomic_DNA"/>
</dbReference>
<dbReference type="EMBL" id="CP002685">
    <property type="protein sequence ID" value="AEC08630.1"/>
    <property type="molecule type" value="Genomic_DNA"/>
</dbReference>
<dbReference type="EMBL" id="AY050946">
    <property type="protein sequence ID" value="AAK93623.1"/>
    <property type="molecule type" value="mRNA"/>
</dbReference>
<dbReference type="EMBL" id="AY142584">
    <property type="protein sequence ID" value="AAN13153.1"/>
    <property type="molecule type" value="mRNA"/>
</dbReference>
<dbReference type="PIR" id="F84728">
    <property type="entry name" value="F84728"/>
</dbReference>
<dbReference type="RefSeq" id="NP_565735.1">
    <property type="nucleotide sequence ID" value="NM_128767.4"/>
</dbReference>
<dbReference type="SMR" id="Q9SKZ2"/>
<dbReference type="FunCoup" id="Q9SKZ2">
    <property type="interactions" value="5039"/>
</dbReference>
<dbReference type="STRING" id="3702.Q9SKZ2"/>
<dbReference type="iPTMnet" id="Q9SKZ2"/>
<dbReference type="PaxDb" id="3702-AT2G32070.1"/>
<dbReference type="ProteomicsDB" id="239175"/>
<dbReference type="EnsemblPlants" id="AT2G32070.1">
    <property type="protein sequence ID" value="AT2G32070.1"/>
    <property type="gene ID" value="AT2G32070"/>
</dbReference>
<dbReference type="GeneID" id="817767"/>
<dbReference type="Gramene" id="AT2G32070.1">
    <property type="protein sequence ID" value="AT2G32070.1"/>
    <property type="gene ID" value="AT2G32070"/>
</dbReference>
<dbReference type="KEGG" id="ath:AT2G32070"/>
<dbReference type="Araport" id="AT2G32070"/>
<dbReference type="TAIR" id="AT2G32070">
    <property type="gene designation" value="CAF1K"/>
</dbReference>
<dbReference type="eggNOG" id="KOG0304">
    <property type="taxonomic scope" value="Eukaryota"/>
</dbReference>
<dbReference type="HOGENOM" id="CLU_027974_0_1_1"/>
<dbReference type="InParanoid" id="Q9SKZ2"/>
<dbReference type="OMA" id="HIREVWS"/>
<dbReference type="PhylomeDB" id="Q9SKZ2"/>
<dbReference type="PRO" id="PR:Q9SKZ2"/>
<dbReference type="Proteomes" id="UP000006548">
    <property type="component" value="Chromosome 2"/>
</dbReference>
<dbReference type="ExpressionAtlas" id="Q9SKZ2">
    <property type="expression patterns" value="baseline and differential"/>
</dbReference>
<dbReference type="GO" id="GO:0030014">
    <property type="term" value="C:CCR4-NOT complex"/>
    <property type="evidence" value="ECO:0007669"/>
    <property type="project" value="InterPro"/>
</dbReference>
<dbReference type="GO" id="GO:0005737">
    <property type="term" value="C:cytoplasm"/>
    <property type="evidence" value="ECO:0007669"/>
    <property type="project" value="UniProtKB-SubCell"/>
</dbReference>
<dbReference type="GO" id="GO:0005634">
    <property type="term" value="C:nucleus"/>
    <property type="evidence" value="ECO:0007669"/>
    <property type="project" value="UniProtKB-SubCell"/>
</dbReference>
<dbReference type="GO" id="GO:0046872">
    <property type="term" value="F:metal ion binding"/>
    <property type="evidence" value="ECO:0007669"/>
    <property type="project" value="UniProtKB-KW"/>
</dbReference>
<dbReference type="GO" id="GO:0004535">
    <property type="term" value="F:poly(A)-specific ribonuclease activity"/>
    <property type="evidence" value="ECO:0007669"/>
    <property type="project" value="UniProtKB-EC"/>
</dbReference>
<dbReference type="GO" id="GO:0003723">
    <property type="term" value="F:RNA binding"/>
    <property type="evidence" value="ECO:0007669"/>
    <property type="project" value="UniProtKB-KW"/>
</dbReference>
<dbReference type="FunFam" id="3.30.420.10:FF:000027">
    <property type="entry name" value="Putative CCR4-associated factor 1 7"/>
    <property type="match status" value="1"/>
</dbReference>
<dbReference type="Gene3D" id="3.30.420.10">
    <property type="entry name" value="Ribonuclease H-like superfamily/Ribonuclease H"/>
    <property type="match status" value="1"/>
</dbReference>
<dbReference type="InterPro" id="IPR039637">
    <property type="entry name" value="CNOT7/CNOT8/Pop2"/>
</dbReference>
<dbReference type="InterPro" id="IPR006941">
    <property type="entry name" value="RNase_CAF1"/>
</dbReference>
<dbReference type="InterPro" id="IPR012337">
    <property type="entry name" value="RNaseH-like_sf"/>
</dbReference>
<dbReference type="InterPro" id="IPR036397">
    <property type="entry name" value="RNaseH_sf"/>
</dbReference>
<dbReference type="PANTHER" id="PTHR10797">
    <property type="entry name" value="CCR4-NOT TRANSCRIPTION COMPLEX SUBUNIT"/>
    <property type="match status" value="1"/>
</dbReference>
<dbReference type="Pfam" id="PF04857">
    <property type="entry name" value="CAF1"/>
    <property type="match status" value="2"/>
</dbReference>
<dbReference type="SUPFAM" id="SSF53098">
    <property type="entry name" value="Ribonuclease H-like"/>
    <property type="match status" value="1"/>
</dbReference>
<keyword id="KW-0963">Cytoplasm</keyword>
<keyword id="KW-0269">Exonuclease</keyword>
<keyword id="KW-0378">Hydrolase</keyword>
<keyword id="KW-0479">Metal-binding</keyword>
<keyword id="KW-0540">Nuclease</keyword>
<keyword id="KW-0539">Nucleus</keyword>
<keyword id="KW-1185">Reference proteome</keyword>
<keyword id="KW-0694">RNA-binding</keyword>
<keyword id="KW-0804">Transcription</keyword>
<keyword id="KW-0805">Transcription regulation</keyword>
<gene>
    <name type="primary">CAF1-7</name>
    <name type="ordered locus">At2g32070</name>
    <name type="ORF">F22D22.18</name>
</gene>
<name>CAF1G_ARATH</name>
<feature type="chain" id="PRO_0000371557" description="Probable CCR4-associated factor 1 homolog 7">
    <location>
        <begin position="1"/>
        <end position="275"/>
    </location>
</feature>
<feature type="binding site" evidence="1">
    <location>
        <position position="40"/>
    </location>
    <ligand>
        <name>a divalent metal cation</name>
        <dbReference type="ChEBI" id="CHEBI:60240"/>
        <note>catalytic</note>
    </ligand>
</feature>
<feature type="binding site" evidence="1">
    <location>
        <position position="42"/>
    </location>
    <ligand>
        <name>a divalent metal cation</name>
        <dbReference type="ChEBI" id="CHEBI:60240"/>
        <note>catalytic</note>
    </ligand>
</feature>
<feature type="binding site" evidence="1">
    <location>
        <position position="167"/>
    </location>
    <ligand>
        <name>a divalent metal cation</name>
        <dbReference type="ChEBI" id="CHEBI:60240"/>
        <note>catalytic</note>
    </ligand>
</feature>
<feature type="binding site" evidence="1">
    <location>
        <position position="236"/>
    </location>
    <ligand>
        <name>a divalent metal cation</name>
        <dbReference type="ChEBI" id="CHEBI:60240"/>
        <note>catalytic</note>
    </ligand>
</feature>
<evidence type="ECO:0000250" key="1"/>
<evidence type="ECO:0000305" key="2"/>
<sequence length="275" mass="31543">MSLFLKDDSIQIREVWNDNLESEMALIREVVDDFPFVAMDTEFPGIVCRPVGTFKTNTEYHYETLKTNVNILKMIQLGLTFSDEKGNLPTCGTDNKYCIWQFNFREFDLESDIYATDSIELLRQSGIDFVKNNEFGIDSKRFAELLMSSGIVLNENVHWVTFHSGYDFGYLLKLLTCQNLPETQTGFFEMISVYFPRVYDIKHLMKFCNSLHGGLNKLAELLDVERVGICHQAGSDSLLTSCTFRKLQENFFIGSMEKYSGVLYGLGVENGQIVH</sequence>
<proteinExistence type="evidence at transcript level"/>
<protein>
    <recommendedName>
        <fullName>Probable CCR4-associated factor 1 homolog 7</fullName>
        <ecNumber>3.1.13.4</ecNumber>
    </recommendedName>
</protein>
<organism>
    <name type="scientific">Arabidopsis thaliana</name>
    <name type="common">Mouse-ear cress</name>
    <dbReference type="NCBI Taxonomy" id="3702"/>
    <lineage>
        <taxon>Eukaryota</taxon>
        <taxon>Viridiplantae</taxon>
        <taxon>Streptophyta</taxon>
        <taxon>Embryophyta</taxon>
        <taxon>Tracheophyta</taxon>
        <taxon>Spermatophyta</taxon>
        <taxon>Magnoliopsida</taxon>
        <taxon>eudicotyledons</taxon>
        <taxon>Gunneridae</taxon>
        <taxon>Pentapetalae</taxon>
        <taxon>rosids</taxon>
        <taxon>malvids</taxon>
        <taxon>Brassicales</taxon>
        <taxon>Brassicaceae</taxon>
        <taxon>Camelineae</taxon>
        <taxon>Arabidopsis</taxon>
    </lineage>
</organism>
<accession>Q9SKZ2</accession>
<accession>Q949R6</accession>